<proteinExistence type="inferred from homology"/>
<protein>
    <recommendedName>
        <fullName evidence="1">4-hydroxy-tetrahydrodipicolinate reductase</fullName>
        <shortName evidence="1">HTPA reductase</shortName>
        <ecNumber evidence="1">1.17.1.8</ecNumber>
    </recommendedName>
</protein>
<reference key="1">
    <citation type="journal article" date="2006" name="Genome Res.">
        <title>Massive genome erosion and functional adaptations provide insights into the symbiotic lifestyle of Sodalis glossinidius in the tsetse host.</title>
        <authorList>
            <person name="Toh H."/>
            <person name="Weiss B.L."/>
            <person name="Perkin S.A.H."/>
            <person name="Yamashita A."/>
            <person name="Oshima K."/>
            <person name="Hattori M."/>
            <person name="Aksoy S."/>
        </authorList>
    </citation>
    <scope>NUCLEOTIDE SEQUENCE [LARGE SCALE GENOMIC DNA]</scope>
    <source>
        <strain>morsitans</strain>
    </source>
</reference>
<comment type="function">
    <text evidence="1">Catalyzes the conversion of 4-hydroxy-tetrahydrodipicolinate (HTPA) to tetrahydrodipicolinate.</text>
</comment>
<comment type="catalytic activity">
    <reaction evidence="1">
        <text>(S)-2,3,4,5-tetrahydrodipicolinate + NAD(+) + H2O = (2S,4S)-4-hydroxy-2,3,4,5-tetrahydrodipicolinate + NADH + H(+)</text>
        <dbReference type="Rhea" id="RHEA:35323"/>
        <dbReference type="ChEBI" id="CHEBI:15377"/>
        <dbReference type="ChEBI" id="CHEBI:15378"/>
        <dbReference type="ChEBI" id="CHEBI:16845"/>
        <dbReference type="ChEBI" id="CHEBI:57540"/>
        <dbReference type="ChEBI" id="CHEBI:57945"/>
        <dbReference type="ChEBI" id="CHEBI:67139"/>
        <dbReference type="EC" id="1.17.1.8"/>
    </reaction>
</comment>
<comment type="catalytic activity">
    <reaction evidence="1">
        <text>(S)-2,3,4,5-tetrahydrodipicolinate + NADP(+) + H2O = (2S,4S)-4-hydroxy-2,3,4,5-tetrahydrodipicolinate + NADPH + H(+)</text>
        <dbReference type="Rhea" id="RHEA:35331"/>
        <dbReference type="ChEBI" id="CHEBI:15377"/>
        <dbReference type="ChEBI" id="CHEBI:15378"/>
        <dbReference type="ChEBI" id="CHEBI:16845"/>
        <dbReference type="ChEBI" id="CHEBI:57783"/>
        <dbReference type="ChEBI" id="CHEBI:58349"/>
        <dbReference type="ChEBI" id="CHEBI:67139"/>
        <dbReference type="EC" id="1.17.1.8"/>
    </reaction>
</comment>
<comment type="pathway">
    <text evidence="1">Amino-acid biosynthesis; L-lysine biosynthesis via DAP pathway; (S)-tetrahydrodipicolinate from L-aspartate: step 4/4.</text>
</comment>
<comment type="subunit">
    <text evidence="1">Homotetramer.</text>
</comment>
<comment type="subcellular location">
    <subcellularLocation>
        <location evidence="1">Cytoplasm</location>
    </subcellularLocation>
</comment>
<comment type="similarity">
    <text evidence="1">Belongs to the DapB family.</text>
</comment>
<comment type="caution">
    <text evidence="2">Was originally thought to be a dihydrodipicolinate reductase (DHDPR), catalyzing the conversion of dihydrodipicolinate to tetrahydrodipicolinate. However, it was shown in E.coli that the substrate of the enzymatic reaction is not dihydrodipicolinate (DHDP) but in fact (2S,4S)-4-hydroxy-2,3,4,5-tetrahydrodipicolinic acid (HTPA), the product released by the DapA-catalyzed reaction.</text>
</comment>
<gene>
    <name evidence="1" type="primary">dapB</name>
    <name type="ordered locus">SG0418</name>
</gene>
<evidence type="ECO:0000255" key="1">
    <source>
        <dbReference type="HAMAP-Rule" id="MF_00102"/>
    </source>
</evidence>
<evidence type="ECO:0000305" key="2"/>
<keyword id="KW-0028">Amino-acid biosynthesis</keyword>
<keyword id="KW-0963">Cytoplasm</keyword>
<keyword id="KW-0220">Diaminopimelate biosynthesis</keyword>
<keyword id="KW-0457">Lysine biosynthesis</keyword>
<keyword id="KW-0520">NAD</keyword>
<keyword id="KW-0521">NADP</keyword>
<keyword id="KW-0560">Oxidoreductase</keyword>
<name>DAPB_SODGM</name>
<dbReference type="EC" id="1.17.1.8" evidence="1"/>
<dbReference type="EMBL" id="AP008232">
    <property type="protein sequence ID" value="BAE73693.1"/>
    <property type="molecule type" value="Genomic_DNA"/>
</dbReference>
<dbReference type="RefSeq" id="WP_011410281.1">
    <property type="nucleotide sequence ID" value="NC_007712.1"/>
</dbReference>
<dbReference type="SMR" id="Q2NVY2"/>
<dbReference type="STRING" id="343509.SG0418"/>
<dbReference type="KEGG" id="sgl:SG0418"/>
<dbReference type="eggNOG" id="COG0289">
    <property type="taxonomic scope" value="Bacteria"/>
</dbReference>
<dbReference type="HOGENOM" id="CLU_047479_2_1_6"/>
<dbReference type="OrthoDB" id="9790352at2"/>
<dbReference type="BioCyc" id="SGLO343509:SGP1_RS03845-MONOMER"/>
<dbReference type="UniPathway" id="UPA00034">
    <property type="reaction ID" value="UER00018"/>
</dbReference>
<dbReference type="Proteomes" id="UP000001932">
    <property type="component" value="Chromosome"/>
</dbReference>
<dbReference type="GO" id="GO:0005829">
    <property type="term" value="C:cytosol"/>
    <property type="evidence" value="ECO:0007669"/>
    <property type="project" value="TreeGrafter"/>
</dbReference>
<dbReference type="GO" id="GO:0008839">
    <property type="term" value="F:4-hydroxy-tetrahydrodipicolinate reductase"/>
    <property type="evidence" value="ECO:0007669"/>
    <property type="project" value="UniProtKB-EC"/>
</dbReference>
<dbReference type="GO" id="GO:0051287">
    <property type="term" value="F:NAD binding"/>
    <property type="evidence" value="ECO:0007669"/>
    <property type="project" value="UniProtKB-UniRule"/>
</dbReference>
<dbReference type="GO" id="GO:0050661">
    <property type="term" value="F:NADP binding"/>
    <property type="evidence" value="ECO:0007669"/>
    <property type="project" value="UniProtKB-UniRule"/>
</dbReference>
<dbReference type="GO" id="GO:0016726">
    <property type="term" value="F:oxidoreductase activity, acting on CH or CH2 groups, NAD or NADP as acceptor"/>
    <property type="evidence" value="ECO:0007669"/>
    <property type="project" value="UniProtKB-UniRule"/>
</dbReference>
<dbReference type="GO" id="GO:0019877">
    <property type="term" value="P:diaminopimelate biosynthetic process"/>
    <property type="evidence" value="ECO:0007669"/>
    <property type="project" value="UniProtKB-UniRule"/>
</dbReference>
<dbReference type="GO" id="GO:0009089">
    <property type="term" value="P:lysine biosynthetic process via diaminopimelate"/>
    <property type="evidence" value="ECO:0007669"/>
    <property type="project" value="UniProtKB-UniRule"/>
</dbReference>
<dbReference type="CDD" id="cd02274">
    <property type="entry name" value="DHDPR_N"/>
    <property type="match status" value="1"/>
</dbReference>
<dbReference type="FunFam" id="3.30.360.10:FF:000004">
    <property type="entry name" value="4-hydroxy-tetrahydrodipicolinate reductase"/>
    <property type="match status" value="1"/>
</dbReference>
<dbReference type="FunFam" id="3.40.50.720:FF:000048">
    <property type="entry name" value="4-hydroxy-tetrahydrodipicolinate reductase"/>
    <property type="match status" value="1"/>
</dbReference>
<dbReference type="Gene3D" id="3.30.360.10">
    <property type="entry name" value="Dihydrodipicolinate Reductase, domain 2"/>
    <property type="match status" value="1"/>
</dbReference>
<dbReference type="Gene3D" id="3.40.50.720">
    <property type="entry name" value="NAD(P)-binding Rossmann-like Domain"/>
    <property type="match status" value="1"/>
</dbReference>
<dbReference type="HAMAP" id="MF_00102">
    <property type="entry name" value="DapB"/>
    <property type="match status" value="1"/>
</dbReference>
<dbReference type="InterPro" id="IPR022663">
    <property type="entry name" value="DapB_C"/>
</dbReference>
<dbReference type="InterPro" id="IPR000846">
    <property type="entry name" value="DapB_N"/>
</dbReference>
<dbReference type="InterPro" id="IPR022664">
    <property type="entry name" value="DapB_N_CS"/>
</dbReference>
<dbReference type="InterPro" id="IPR023940">
    <property type="entry name" value="DHDPR_bac"/>
</dbReference>
<dbReference type="InterPro" id="IPR036291">
    <property type="entry name" value="NAD(P)-bd_dom_sf"/>
</dbReference>
<dbReference type="NCBIfam" id="TIGR00036">
    <property type="entry name" value="dapB"/>
    <property type="match status" value="1"/>
</dbReference>
<dbReference type="PANTHER" id="PTHR20836:SF0">
    <property type="entry name" value="4-HYDROXY-TETRAHYDRODIPICOLINATE REDUCTASE 1, CHLOROPLASTIC-RELATED"/>
    <property type="match status" value="1"/>
</dbReference>
<dbReference type="PANTHER" id="PTHR20836">
    <property type="entry name" value="DIHYDRODIPICOLINATE REDUCTASE"/>
    <property type="match status" value="1"/>
</dbReference>
<dbReference type="Pfam" id="PF05173">
    <property type="entry name" value="DapB_C"/>
    <property type="match status" value="1"/>
</dbReference>
<dbReference type="Pfam" id="PF01113">
    <property type="entry name" value="DapB_N"/>
    <property type="match status" value="1"/>
</dbReference>
<dbReference type="PIRSF" id="PIRSF000161">
    <property type="entry name" value="DHPR"/>
    <property type="match status" value="1"/>
</dbReference>
<dbReference type="SUPFAM" id="SSF55347">
    <property type="entry name" value="Glyceraldehyde-3-phosphate dehydrogenase-like, C-terminal domain"/>
    <property type="match status" value="1"/>
</dbReference>
<dbReference type="SUPFAM" id="SSF51735">
    <property type="entry name" value="NAD(P)-binding Rossmann-fold domains"/>
    <property type="match status" value="1"/>
</dbReference>
<dbReference type="PROSITE" id="PS01298">
    <property type="entry name" value="DAPB"/>
    <property type="match status" value="1"/>
</dbReference>
<organism>
    <name type="scientific">Sodalis glossinidius (strain morsitans)</name>
    <dbReference type="NCBI Taxonomy" id="343509"/>
    <lineage>
        <taxon>Bacteria</taxon>
        <taxon>Pseudomonadati</taxon>
        <taxon>Pseudomonadota</taxon>
        <taxon>Gammaproteobacteria</taxon>
        <taxon>Enterobacterales</taxon>
        <taxon>Bruguierivoracaceae</taxon>
        <taxon>Sodalis</taxon>
    </lineage>
</organism>
<accession>Q2NVY2</accession>
<sequence length="273" mass="28683">MSNTSIRIAVAGAGGRMGRQLIQAVAQSEQATLGAALTRTDSALCGVDAGELAGIGALGVAISGELAAVKDDFDILIDFTRPDASMAYLAFCRRHHKGIVIGTTGFSDAQKEAIRAEAQETGVVFAANFSVGVNLMLKLLEKAAQVMGEEADIEIIEAHHRHKVDAPSGTALAMGEAIAGALGRDLARCAVYSREGHTGERKAKSIGFATVRAGDIVGEHTAMFAEIGERLEITHKASSRMTFASGAVRAAVWLSGQKRGFFDMVNVLNLDKI</sequence>
<feature type="chain" id="PRO_1000008644" description="4-hydroxy-tetrahydrodipicolinate reductase">
    <location>
        <begin position="1"/>
        <end position="273"/>
    </location>
</feature>
<feature type="active site" description="Proton donor/acceptor" evidence="1">
    <location>
        <position position="159"/>
    </location>
</feature>
<feature type="active site" description="Proton donor" evidence="1">
    <location>
        <position position="163"/>
    </location>
</feature>
<feature type="binding site" evidence="1">
    <location>
        <begin position="12"/>
        <end position="17"/>
    </location>
    <ligand>
        <name>NAD(+)</name>
        <dbReference type="ChEBI" id="CHEBI:57540"/>
    </ligand>
</feature>
<feature type="binding site" evidence="1">
    <location>
        <position position="39"/>
    </location>
    <ligand>
        <name>NADP(+)</name>
        <dbReference type="ChEBI" id="CHEBI:58349"/>
    </ligand>
</feature>
<feature type="binding site" evidence="1">
    <location>
        <begin position="102"/>
        <end position="104"/>
    </location>
    <ligand>
        <name>NAD(+)</name>
        <dbReference type="ChEBI" id="CHEBI:57540"/>
    </ligand>
</feature>
<feature type="binding site" evidence="1">
    <location>
        <begin position="126"/>
        <end position="129"/>
    </location>
    <ligand>
        <name>NAD(+)</name>
        <dbReference type="ChEBI" id="CHEBI:57540"/>
    </ligand>
</feature>
<feature type="binding site" evidence="1">
    <location>
        <position position="160"/>
    </location>
    <ligand>
        <name>(S)-2,3,4,5-tetrahydrodipicolinate</name>
        <dbReference type="ChEBI" id="CHEBI:16845"/>
    </ligand>
</feature>
<feature type="binding site" evidence="1">
    <location>
        <begin position="169"/>
        <end position="170"/>
    </location>
    <ligand>
        <name>(S)-2,3,4,5-tetrahydrodipicolinate</name>
        <dbReference type="ChEBI" id="CHEBI:16845"/>
    </ligand>
</feature>